<comment type="function">
    <text evidence="2">Component of the ubiquinol-cytochrome c reductase complex (complex III or cytochrome b-c1 complex) that is part of the mitochondrial respiratory chain. The b-c1 complex mediates electron transfer from ubiquinol to cytochrome c. Contributes to the generation of a proton gradient across the mitochondrial membrane that is then used for ATP synthesis.</text>
</comment>
<comment type="cofactor">
    <cofactor evidence="2">
        <name>heme b</name>
        <dbReference type="ChEBI" id="CHEBI:60344"/>
    </cofactor>
    <text evidence="2">Binds 2 heme b groups non-covalently.</text>
</comment>
<comment type="subunit">
    <text evidence="2">The cytochrome bc1 complex contains 11 subunits: 3 respiratory subunits (MT-CYB, CYC1 and UQCRFS1), 2 core proteins (UQCRC1 and UQCRC2) and 6 low-molecular weight proteins (UQCRH/QCR6, UQCRB/QCR7, UQCRQ/QCR8, UQCR10/QCR9, UQCR11/QCR10 and a cleavage product of UQCRFS1). This cytochrome bc1 complex then forms a dimer.</text>
</comment>
<comment type="subcellular location">
    <subcellularLocation>
        <location evidence="2">Mitochondrion inner membrane</location>
        <topology evidence="2">Multi-pass membrane protein</topology>
    </subcellularLocation>
</comment>
<comment type="miscellaneous">
    <text evidence="1">Heme 1 (or BL or b562) is low-potential and absorbs at about 562 nm, and heme 2 (or BH or b566) is high-potential and absorbs at about 566 nm.</text>
</comment>
<comment type="similarity">
    <text evidence="3 4">Belongs to the cytochrome b family.</text>
</comment>
<comment type="caution">
    <text evidence="2">The full-length protein contains only eight transmembrane helices, not nine as predicted by bioinformatics tools.</text>
</comment>
<keyword id="KW-0249">Electron transport</keyword>
<keyword id="KW-0349">Heme</keyword>
<keyword id="KW-0408">Iron</keyword>
<keyword id="KW-0472">Membrane</keyword>
<keyword id="KW-0479">Metal-binding</keyword>
<keyword id="KW-0496">Mitochondrion</keyword>
<keyword id="KW-0999">Mitochondrion inner membrane</keyword>
<keyword id="KW-0679">Respiratory chain</keyword>
<keyword id="KW-0812">Transmembrane</keyword>
<keyword id="KW-1133">Transmembrane helix</keyword>
<keyword id="KW-0813">Transport</keyword>
<keyword id="KW-0830">Ubiquinone</keyword>
<proteinExistence type="inferred from homology"/>
<feature type="chain" id="PRO_0000061209" description="Cytochrome b">
    <location>
        <begin position="1"/>
        <end position="379"/>
    </location>
</feature>
<feature type="transmembrane region" description="Helical" evidence="2">
    <location>
        <begin position="33"/>
        <end position="53"/>
    </location>
</feature>
<feature type="transmembrane region" description="Helical" evidence="2">
    <location>
        <begin position="77"/>
        <end position="98"/>
    </location>
</feature>
<feature type="transmembrane region" description="Helical" evidence="2">
    <location>
        <begin position="113"/>
        <end position="133"/>
    </location>
</feature>
<feature type="transmembrane region" description="Helical" evidence="2">
    <location>
        <begin position="178"/>
        <end position="198"/>
    </location>
</feature>
<feature type="transmembrane region" description="Helical" evidence="2">
    <location>
        <begin position="226"/>
        <end position="246"/>
    </location>
</feature>
<feature type="transmembrane region" description="Helical" evidence="2">
    <location>
        <begin position="288"/>
        <end position="308"/>
    </location>
</feature>
<feature type="transmembrane region" description="Helical" evidence="2">
    <location>
        <begin position="320"/>
        <end position="340"/>
    </location>
</feature>
<feature type="transmembrane region" description="Helical" evidence="2">
    <location>
        <begin position="347"/>
        <end position="367"/>
    </location>
</feature>
<feature type="binding site" description="axial binding residue" evidence="2">
    <location>
        <position position="83"/>
    </location>
    <ligand>
        <name>heme b</name>
        <dbReference type="ChEBI" id="CHEBI:60344"/>
        <label>b562</label>
    </ligand>
    <ligandPart>
        <name>Fe</name>
        <dbReference type="ChEBI" id="CHEBI:18248"/>
    </ligandPart>
</feature>
<feature type="binding site" description="axial binding residue" evidence="2">
    <location>
        <position position="97"/>
    </location>
    <ligand>
        <name>heme b</name>
        <dbReference type="ChEBI" id="CHEBI:60344"/>
        <label>b566</label>
    </ligand>
    <ligandPart>
        <name>Fe</name>
        <dbReference type="ChEBI" id="CHEBI:18248"/>
    </ligandPart>
</feature>
<feature type="binding site" description="axial binding residue" evidence="2">
    <location>
        <position position="182"/>
    </location>
    <ligand>
        <name>heme b</name>
        <dbReference type="ChEBI" id="CHEBI:60344"/>
        <label>b562</label>
    </ligand>
    <ligandPart>
        <name>Fe</name>
        <dbReference type="ChEBI" id="CHEBI:18248"/>
    </ligandPart>
</feature>
<feature type="binding site" description="axial binding residue" evidence="2">
    <location>
        <position position="196"/>
    </location>
    <ligand>
        <name>heme b</name>
        <dbReference type="ChEBI" id="CHEBI:60344"/>
        <label>b566</label>
    </ligand>
    <ligandPart>
        <name>Fe</name>
        <dbReference type="ChEBI" id="CHEBI:18248"/>
    </ligandPart>
</feature>
<feature type="binding site" evidence="2">
    <location>
        <position position="201"/>
    </location>
    <ligand>
        <name>a ubiquinone</name>
        <dbReference type="ChEBI" id="CHEBI:16389"/>
    </ligand>
</feature>
<dbReference type="EMBL" id="AF026889">
    <property type="protein sequence ID" value="AAB94611.1"/>
    <property type="molecule type" value="Genomic_DNA"/>
</dbReference>
<dbReference type="SMR" id="O47584"/>
<dbReference type="GO" id="GO:0005743">
    <property type="term" value="C:mitochondrial inner membrane"/>
    <property type="evidence" value="ECO:0007669"/>
    <property type="project" value="UniProtKB-SubCell"/>
</dbReference>
<dbReference type="GO" id="GO:0045275">
    <property type="term" value="C:respiratory chain complex III"/>
    <property type="evidence" value="ECO:0007669"/>
    <property type="project" value="InterPro"/>
</dbReference>
<dbReference type="GO" id="GO:0046872">
    <property type="term" value="F:metal ion binding"/>
    <property type="evidence" value="ECO:0007669"/>
    <property type="project" value="UniProtKB-KW"/>
</dbReference>
<dbReference type="GO" id="GO:0008121">
    <property type="term" value="F:ubiquinol-cytochrome-c reductase activity"/>
    <property type="evidence" value="ECO:0007669"/>
    <property type="project" value="InterPro"/>
</dbReference>
<dbReference type="GO" id="GO:0006122">
    <property type="term" value="P:mitochondrial electron transport, ubiquinol to cytochrome c"/>
    <property type="evidence" value="ECO:0007669"/>
    <property type="project" value="TreeGrafter"/>
</dbReference>
<dbReference type="CDD" id="cd00290">
    <property type="entry name" value="cytochrome_b_C"/>
    <property type="match status" value="1"/>
</dbReference>
<dbReference type="CDD" id="cd00284">
    <property type="entry name" value="Cytochrome_b_N"/>
    <property type="match status" value="1"/>
</dbReference>
<dbReference type="FunFam" id="1.20.810.10:FF:000002">
    <property type="entry name" value="Cytochrome b"/>
    <property type="match status" value="1"/>
</dbReference>
<dbReference type="Gene3D" id="1.20.810.10">
    <property type="entry name" value="Cytochrome Bc1 Complex, Chain C"/>
    <property type="match status" value="1"/>
</dbReference>
<dbReference type="InterPro" id="IPR005798">
    <property type="entry name" value="Cyt_b/b6_C"/>
</dbReference>
<dbReference type="InterPro" id="IPR036150">
    <property type="entry name" value="Cyt_b/b6_C_sf"/>
</dbReference>
<dbReference type="InterPro" id="IPR005797">
    <property type="entry name" value="Cyt_b/b6_N"/>
</dbReference>
<dbReference type="InterPro" id="IPR027387">
    <property type="entry name" value="Cytb/b6-like_sf"/>
</dbReference>
<dbReference type="InterPro" id="IPR030689">
    <property type="entry name" value="Cytochrome_b"/>
</dbReference>
<dbReference type="InterPro" id="IPR048260">
    <property type="entry name" value="Cytochrome_b_C_euk/bac"/>
</dbReference>
<dbReference type="InterPro" id="IPR048259">
    <property type="entry name" value="Cytochrome_b_N_euk/bac"/>
</dbReference>
<dbReference type="InterPro" id="IPR016174">
    <property type="entry name" value="Di-haem_cyt_TM"/>
</dbReference>
<dbReference type="PANTHER" id="PTHR19271">
    <property type="entry name" value="CYTOCHROME B"/>
    <property type="match status" value="1"/>
</dbReference>
<dbReference type="PANTHER" id="PTHR19271:SF16">
    <property type="entry name" value="CYTOCHROME B"/>
    <property type="match status" value="1"/>
</dbReference>
<dbReference type="Pfam" id="PF00032">
    <property type="entry name" value="Cytochrom_B_C"/>
    <property type="match status" value="1"/>
</dbReference>
<dbReference type="Pfam" id="PF00033">
    <property type="entry name" value="Cytochrome_B"/>
    <property type="match status" value="1"/>
</dbReference>
<dbReference type="PIRSF" id="PIRSF038885">
    <property type="entry name" value="COB"/>
    <property type="match status" value="1"/>
</dbReference>
<dbReference type="SUPFAM" id="SSF81648">
    <property type="entry name" value="a domain/subunit of cytochrome bc1 complex (Ubiquinol-cytochrome c reductase)"/>
    <property type="match status" value="1"/>
</dbReference>
<dbReference type="SUPFAM" id="SSF81342">
    <property type="entry name" value="Transmembrane di-heme cytochromes"/>
    <property type="match status" value="1"/>
</dbReference>
<dbReference type="PROSITE" id="PS51003">
    <property type="entry name" value="CYTB_CTER"/>
    <property type="match status" value="1"/>
</dbReference>
<dbReference type="PROSITE" id="PS51002">
    <property type="entry name" value="CYTB_NTER"/>
    <property type="match status" value="1"/>
</dbReference>
<gene>
    <name type="primary">MT-CYB</name>
    <name type="synonym">COB</name>
    <name type="synonym">CYTB</name>
    <name type="synonym">MTCYB</name>
</gene>
<evidence type="ECO:0000250" key="1"/>
<evidence type="ECO:0000250" key="2">
    <source>
        <dbReference type="UniProtKB" id="P00157"/>
    </source>
</evidence>
<evidence type="ECO:0000255" key="3">
    <source>
        <dbReference type="PROSITE-ProRule" id="PRU00967"/>
    </source>
</evidence>
<evidence type="ECO:0000255" key="4">
    <source>
        <dbReference type="PROSITE-ProRule" id="PRU00968"/>
    </source>
</evidence>
<organism>
    <name type="scientific">Moschus leucogaster</name>
    <name type="common">Himalayan musk deer</name>
    <dbReference type="NCBI Taxonomy" id="68414"/>
    <lineage>
        <taxon>Eukaryota</taxon>
        <taxon>Metazoa</taxon>
        <taxon>Chordata</taxon>
        <taxon>Craniata</taxon>
        <taxon>Vertebrata</taxon>
        <taxon>Euteleostomi</taxon>
        <taxon>Mammalia</taxon>
        <taxon>Eutheria</taxon>
        <taxon>Laurasiatheria</taxon>
        <taxon>Artiodactyla</taxon>
        <taxon>Ruminantia</taxon>
        <taxon>Pecora</taxon>
        <taxon>Moschidae</taxon>
        <taxon>Moschus</taxon>
    </lineage>
</organism>
<geneLocation type="mitochondrion"/>
<name>CYB_MOSLE</name>
<protein>
    <recommendedName>
        <fullName>Cytochrome b</fullName>
    </recommendedName>
    <alternativeName>
        <fullName>Complex III subunit 3</fullName>
    </alternativeName>
    <alternativeName>
        <fullName>Complex III subunit III</fullName>
    </alternativeName>
    <alternativeName>
        <fullName>Cytochrome b-c1 complex subunit 3</fullName>
    </alternativeName>
    <alternativeName>
        <fullName>Ubiquinol-cytochrome-c reductase complex cytochrome b subunit</fullName>
    </alternativeName>
</protein>
<reference key="1">
    <citation type="submission" date="1997-09" db="EMBL/GenBank/DDBJ databases">
        <authorList>
            <person name="Su B."/>
            <person name="Wang Y.X."/>
            <person name="Lan H."/>
            <person name="Wang W."/>
            <person name="Zhang Y.P."/>
        </authorList>
    </citation>
    <scope>NUCLEOTIDE SEQUENCE [GENOMIC DNA]</scope>
</reference>
<sequence>MTNIRKSHPLMKIVNNAFIDLPAPSNISSWWNFGSLLGICLIIQILTGLFLAMHYTSDTMTAFSSVTHICRDVNYGWIIRYMHANGASMFFICLFMHVGRGLYYGSYTFLETWNIGVILLFTVMATAFMGYVLPWGQMSFWGATVITNLLSAIPYIGTNLVEWIWGGFSVDKATLTRFFAFHFILPFIIAALAMVHLLFLHETGSNNPTGITSDMDKIPFHPYYTIKDILGVLLLILVLMTLVLFTPDLLGDPDNYTPANPLNTPPHIKPEWYFLFAYAILRSIPNKLGGVLALVLSILILIFMPLLHTSKQRSMMFRPLSQCLFWILVADLLTLTWIGGQPVEHPYIIIGQLASIMYFLLILVMMPVASMIENNLLKW</sequence>
<accession>O47584</accession>